<organism>
    <name type="scientific">Marinomonas sp. (strain MWYL1)</name>
    <dbReference type="NCBI Taxonomy" id="400668"/>
    <lineage>
        <taxon>Bacteria</taxon>
        <taxon>Pseudomonadati</taxon>
        <taxon>Pseudomonadota</taxon>
        <taxon>Gammaproteobacteria</taxon>
        <taxon>Oceanospirillales</taxon>
        <taxon>Oceanospirillaceae</taxon>
        <taxon>Marinomonas</taxon>
    </lineage>
</organism>
<sequence>MSVIGLIGAMDEEVAVIKAWMTDVREQTIAGCDFFVGRFEGKDVVLLKSGIGKVNAAVSTTLLLSQFEPEYVINIGSAGGFDPELQVGDVVISDQVVHHDVDVTGFGYLMGQVPNMPATYAADETLVAEAKAALQKVTQVQAKVGLIGTGDSFMNDPVRVEAVRALFPELVAVEMEAAAVAQVCFKFGTPFVVVRSLSDIAGKESPQSFEEYLKVAAENSSLMIQQMLKGN</sequence>
<name>MTNN_MARMS</name>
<comment type="function">
    <text evidence="1">Catalyzes the irreversible cleavage of the glycosidic bond in both 5'-methylthioadenosine (MTA) and S-adenosylhomocysteine (SAH/AdoHcy) to adenine and the corresponding thioribose, 5'-methylthioribose and S-ribosylhomocysteine, respectively. Also cleaves 5'-deoxyadenosine, a toxic by-product of radical S-adenosylmethionine (SAM) enzymes, into 5-deoxyribose and adenine.</text>
</comment>
<comment type="catalytic activity">
    <reaction evidence="1">
        <text>S-adenosyl-L-homocysteine + H2O = S-(5-deoxy-D-ribos-5-yl)-L-homocysteine + adenine</text>
        <dbReference type="Rhea" id="RHEA:17805"/>
        <dbReference type="ChEBI" id="CHEBI:15377"/>
        <dbReference type="ChEBI" id="CHEBI:16708"/>
        <dbReference type="ChEBI" id="CHEBI:57856"/>
        <dbReference type="ChEBI" id="CHEBI:58195"/>
        <dbReference type="EC" id="3.2.2.9"/>
    </reaction>
</comment>
<comment type="catalytic activity">
    <reaction evidence="1">
        <text>S-methyl-5'-thioadenosine + H2O = 5-(methylsulfanyl)-D-ribose + adenine</text>
        <dbReference type="Rhea" id="RHEA:13617"/>
        <dbReference type="ChEBI" id="CHEBI:15377"/>
        <dbReference type="ChEBI" id="CHEBI:16708"/>
        <dbReference type="ChEBI" id="CHEBI:17509"/>
        <dbReference type="ChEBI" id="CHEBI:78440"/>
        <dbReference type="EC" id="3.2.2.9"/>
    </reaction>
</comment>
<comment type="catalytic activity">
    <reaction evidence="1">
        <text>5'-deoxyadenosine + H2O = 5-deoxy-D-ribose + adenine</text>
        <dbReference type="Rhea" id="RHEA:29859"/>
        <dbReference type="ChEBI" id="CHEBI:15377"/>
        <dbReference type="ChEBI" id="CHEBI:16708"/>
        <dbReference type="ChEBI" id="CHEBI:17319"/>
        <dbReference type="ChEBI" id="CHEBI:149540"/>
        <dbReference type="EC" id="3.2.2.9"/>
    </reaction>
    <physiologicalReaction direction="left-to-right" evidence="1">
        <dbReference type="Rhea" id="RHEA:29860"/>
    </physiologicalReaction>
</comment>
<comment type="pathway">
    <text evidence="1">Amino-acid biosynthesis; L-methionine biosynthesis via salvage pathway; S-methyl-5-thio-alpha-D-ribose 1-phosphate from S-methyl-5'-thioadenosine (hydrolase route): step 1/2.</text>
</comment>
<comment type="similarity">
    <text evidence="1">Belongs to the PNP/UDP phosphorylase family. MtnN subfamily.</text>
</comment>
<feature type="chain" id="PRO_0000359318" description="5'-methylthioadenosine/S-adenosylhomocysteine nucleosidase">
    <location>
        <begin position="1"/>
        <end position="231"/>
    </location>
</feature>
<feature type="active site" description="Proton acceptor" evidence="1">
    <location>
        <position position="13"/>
    </location>
</feature>
<feature type="active site" description="Proton donor" evidence="1">
    <location>
        <position position="199"/>
    </location>
</feature>
<feature type="binding site" evidence="1">
    <location>
        <position position="79"/>
    </location>
    <ligand>
        <name>substrate</name>
    </ligand>
</feature>
<feature type="binding site" evidence="1">
    <location>
        <position position="154"/>
    </location>
    <ligand>
        <name>substrate</name>
    </ligand>
</feature>
<feature type="binding site" evidence="1">
    <location>
        <begin position="175"/>
        <end position="176"/>
    </location>
    <ligand>
        <name>substrate</name>
    </ligand>
</feature>
<accession>A6W3C9</accession>
<gene>
    <name evidence="1" type="primary">mtnN</name>
    <name type="ordered locus">Mmwyl1_4313</name>
</gene>
<protein>
    <recommendedName>
        <fullName evidence="1">5'-methylthioadenosine/S-adenosylhomocysteine nucleosidase</fullName>
        <shortName evidence="1">MTA/SAH nucleosidase</shortName>
        <shortName evidence="1">MTAN</shortName>
        <ecNumber evidence="1">3.2.2.9</ecNumber>
    </recommendedName>
    <alternativeName>
        <fullName evidence="1">5'-deoxyadenosine nucleosidase</fullName>
        <shortName evidence="1">DOA nucleosidase</shortName>
        <shortName evidence="1">dAdo nucleosidase</shortName>
    </alternativeName>
    <alternativeName>
        <fullName evidence="1">5'-methylthioadenosine nucleosidase</fullName>
        <shortName evidence="1">MTA nucleosidase</shortName>
    </alternativeName>
    <alternativeName>
        <fullName evidence="1">S-adenosylhomocysteine nucleosidase</fullName>
        <shortName evidence="1">AdoHcy nucleosidase</shortName>
        <shortName evidence="1">SAH nucleosidase</shortName>
        <shortName evidence="1">SRH nucleosidase</shortName>
    </alternativeName>
</protein>
<proteinExistence type="inferred from homology"/>
<keyword id="KW-0028">Amino-acid biosynthesis</keyword>
<keyword id="KW-0378">Hydrolase</keyword>
<keyword id="KW-0486">Methionine biosynthesis</keyword>
<evidence type="ECO:0000255" key="1">
    <source>
        <dbReference type="HAMAP-Rule" id="MF_01684"/>
    </source>
</evidence>
<reference key="1">
    <citation type="submission" date="2007-06" db="EMBL/GenBank/DDBJ databases">
        <title>Complete sequence of Marinomonas sp. MWYL1.</title>
        <authorList>
            <consortium name="US DOE Joint Genome Institute"/>
            <person name="Copeland A."/>
            <person name="Lucas S."/>
            <person name="Lapidus A."/>
            <person name="Barry K."/>
            <person name="Glavina del Rio T."/>
            <person name="Dalin E."/>
            <person name="Tice H."/>
            <person name="Pitluck S."/>
            <person name="Kiss H."/>
            <person name="Brettin T."/>
            <person name="Bruce D."/>
            <person name="Detter J.C."/>
            <person name="Han C."/>
            <person name="Schmutz J."/>
            <person name="Larimer F."/>
            <person name="Land M."/>
            <person name="Hauser L."/>
            <person name="Kyrpides N."/>
            <person name="Kim E."/>
            <person name="Johnston A.W.B."/>
            <person name="Todd J.D."/>
            <person name="Rogers R."/>
            <person name="Wexler M."/>
            <person name="Bond P.L."/>
            <person name="Li Y."/>
            <person name="Richardson P."/>
        </authorList>
    </citation>
    <scope>NUCLEOTIDE SEQUENCE [LARGE SCALE GENOMIC DNA]</scope>
    <source>
        <strain>MWYL1</strain>
    </source>
</reference>
<dbReference type="EC" id="3.2.2.9" evidence="1"/>
<dbReference type="EMBL" id="CP000749">
    <property type="protein sequence ID" value="ABR73208.1"/>
    <property type="molecule type" value="Genomic_DNA"/>
</dbReference>
<dbReference type="SMR" id="A6W3C9"/>
<dbReference type="STRING" id="400668.Mmwyl1_4313"/>
<dbReference type="KEGG" id="mmw:Mmwyl1_4313"/>
<dbReference type="eggNOG" id="COG0775">
    <property type="taxonomic scope" value="Bacteria"/>
</dbReference>
<dbReference type="HOGENOM" id="CLU_031248_2_2_6"/>
<dbReference type="OrthoDB" id="9792278at2"/>
<dbReference type="UniPathway" id="UPA00904">
    <property type="reaction ID" value="UER00871"/>
</dbReference>
<dbReference type="GO" id="GO:0005829">
    <property type="term" value="C:cytosol"/>
    <property type="evidence" value="ECO:0007669"/>
    <property type="project" value="TreeGrafter"/>
</dbReference>
<dbReference type="GO" id="GO:0008782">
    <property type="term" value="F:adenosylhomocysteine nucleosidase activity"/>
    <property type="evidence" value="ECO:0007669"/>
    <property type="project" value="UniProtKB-UniRule"/>
</dbReference>
<dbReference type="GO" id="GO:0008930">
    <property type="term" value="F:methylthioadenosine nucleosidase activity"/>
    <property type="evidence" value="ECO:0007669"/>
    <property type="project" value="UniProtKB-UniRule"/>
</dbReference>
<dbReference type="GO" id="GO:0019509">
    <property type="term" value="P:L-methionine salvage from methylthioadenosine"/>
    <property type="evidence" value="ECO:0007669"/>
    <property type="project" value="UniProtKB-UniRule"/>
</dbReference>
<dbReference type="GO" id="GO:0019284">
    <property type="term" value="P:L-methionine salvage from S-adenosylmethionine"/>
    <property type="evidence" value="ECO:0007669"/>
    <property type="project" value="TreeGrafter"/>
</dbReference>
<dbReference type="GO" id="GO:0009164">
    <property type="term" value="P:nucleoside catabolic process"/>
    <property type="evidence" value="ECO:0007669"/>
    <property type="project" value="InterPro"/>
</dbReference>
<dbReference type="CDD" id="cd09008">
    <property type="entry name" value="MTAN"/>
    <property type="match status" value="1"/>
</dbReference>
<dbReference type="FunFam" id="3.40.50.1580:FF:000001">
    <property type="entry name" value="MTA/SAH nucleosidase family protein"/>
    <property type="match status" value="1"/>
</dbReference>
<dbReference type="Gene3D" id="3.40.50.1580">
    <property type="entry name" value="Nucleoside phosphorylase domain"/>
    <property type="match status" value="1"/>
</dbReference>
<dbReference type="HAMAP" id="MF_01684">
    <property type="entry name" value="Salvage_MtnN"/>
    <property type="match status" value="1"/>
</dbReference>
<dbReference type="InterPro" id="IPR010049">
    <property type="entry name" value="MTA_SAH_Nsdase"/>
</dbReference>
<dbReference type="InterPro" id="IPR000845">
    <property type="entry name" value="Nucleoside_phosphorylase_d"/>
</dbReference>
<dbReference type="InterPro" id="IPR035994">
    <property type="entry name" value="Nucleoside_phosphorylase_sf"/>
</dbReference>
<dbReference type="NCBIfam" id="TIGR01704">
    <property type="entry name" value="MTA_SAH-Nsdase"/>
    <property type="match status" value="1"/>
</dbReference>
<dbReference type="NCBIfam" id="NF004079">
    <property type="entry name" value="PRK05584.1"/>
    <property type="match status" value="1"/>
</dbReference>
<dbReference type="PANTHER" id="PTHR46832">
    <property type="entry name" value="5'-METHYLTHIOADENOSINE/S-ADENOSYLHOMOCYSTEINE NUCLEOSIDASE"/>
    <property type="match status" value="1"/>
</dbReference>
<dbReference type="PANTHER" id="PTHR46832:SF1">
    <property type="entry name" value="5'-METHYLTHIOADENOSINE_S-ADENOSYLHOMOCYSTEINE NUCLEOSIDASE"/>
    <property type="match status" value="1"/>
</dbReference>
<dbReference type="Pfam" id="PF01048">
    <property type="entry name" value="PNP_UDP_1"/>
    <property type="match status" value="1"/>
</dbReference>
<dbReference type="SUPFAM" id="SSF53167">
    <property type="entry name" value="Purine and uridine phosphorylases"/>
    <property type="match status" value="1"/>
</dbReference>